<proteinExistence type="inferred from homology"/>
<name>MBL_BACC1</name>
<accession>P32444</accession>
<keyword id="KW-0067">ATP-binding</keyword>
<keyword id="KW-0133">Cell shape</keyword>
<keyword id="KW-0963">Cytoplasm</keyword>
<keyword id="KW-0547">Nucleotide-binding</keyword>
<reference key="1">
    <citation type="journal article" date="1992" name="Gene">
        <title>Cloning of a gene from Bacillus cereus with homology to the mreB gene from Escherichia coli.</title>
        <authorList>
            <person name="Narahara A."/>
            <person name="Naterstad K."/>
            <person name="Kristensen T."/>
            <person name="Lopez R."/>
            <person name="Bork P."/>
            <person name="Kolstoe A.-B."/>
        </authorList>
    </citation>
    <scope>NUCLEOTIDE SEQUENCE [GENOMIC DNA]</scope>
    <source>
        <strain>ATCC 10987 / NRS 248</strain>
    </source>
</reference>
<reference key="2">
    <citation type="journal article" date="1999" name="Microbiology">
        <title>Genome organization is not conserved between Bacillus cereus and Bacillus subtilis.</title>
        <authorList>
            <person name="Oekstad O.A."/>
            <person name="Hegna I.K."/>
            <person name="Lindbaeck T."/>
            <person name="Rishovd A.-L."/>
            <person name="Kolstoe A.-B."/>
        </authorList>
    </citation>
    <scope>NUCLEOTIDE SEQUENCE [GENOMIC DNA]</scope>
    <source>
        <strain>ATCC 10987 / NRS 248</strain>
    </source>
</reference>
<reference key="3">
    <citation type="journal article" date="2004" name="Nucleic Acids Res.">
        <title>The genome sequence of Bacillus cereus ATCC 10987 reveals metabolic adaptations and a large plasmid related to Bacillus anthracis pXO1.</title>
        <authorList>
            <person name="Rasko D.A."/>
            <person name="Ravel J."/>
            <person name="Oekstad O.A."/>
            <person name="Helgason E."/>
            <person name="Cer R.Z."/>
            <person name="Jiang L."/>
            <person name="Shores K.A."/>
            <person name="Fouts D.E."/>
            <person name="Tourasse N.J."/>
            <person name="Angiuoli S.V."/>
            <person name="Kolonay J.F."/>
            <person name="Nelson W.C."/>
            <person name="Kolstoe A.-B."/>
            <person name="Fraser C.M."/>
            <person name="Read T.D."/>
        </authorList>
    </citation>
    <scope>NUCLEOTIDE SEQUENCE [LARGE SCALE GENOMIC DNA]</scope>
    <source>
        <strain>ATCC 10987 / NRS 248</strain>
    </source>
</reference>
<sequence length="333" mass="35834">MFARDIGIDLGTANVLIHVKGKGIVLNEPSVVAIDRNTGKVLAVGEEARSMVGRTPGNIVAIRPLKDGVIADFEITEAMLKYFINKLDVKSFFSKPRILICCPTNITSVEQKAIREAAERSGGKTVFLEEEPKVAAVGAGMEIFQPSGNMVVDIGGGTTDIAVLSMGDIVTSSSIKMAGDKFDMEILNYIKRKYKLLIGERTSEDIKIKVGTVFPGARSEELEIRGRDMVTGLPRTITVCSEEITEALKENAAVIVQAAKGVLERTPPELSADIIDRGVILTGGGALLHGIDMLLAEELKVPVLIAENPMHCVAVGTGIMLENIDRLPKRALR</sequence>
<organism>
    <name type="scientific">Bacillus cereus (strain ATCC 10987 / NRS 248)</name>
    <dbReference type="NCBI Taxonomy" id="222523"/>
    <lineage>
        <taxon>Bacteria</taxon>
        <taxon>Bacillati</taxon>
        <taxon>Bacillota</taxon>
        <taxon>Bacilli</taxon>
        <taxon>Bacillales</taxon>
        <taxon>Bacillaceae</taxon>
        <taxon>Bacillus</taxon>
        <taxon>Bacillus cereus group</taxon>
    </lineage>
</organism>
<gene>
    <name evidence="2" type="primary">mbl</name>
    <name evidence="3" type="synonym">mreB</name>
    <name type="ordered locus">BCE_5404</name>
</gene>
<comment type="function">
    <text evidence="1">Forms membrane-associated dynamic filaments that are essential for cell shape determination. Acts by regulating cell wall synthesis and cell elongation, and thus cell shape. A feedback loop between cell geometry and Mbl localization may maintain elongated cell shape by targeting cell wall growth to regions of negative cell wall curvature.</text>
</comment>
<comment type="subunit">
    <text evidence="1">Forms polymers.</text>
</comment>
<comment type="subcellular location">
    <subcellularLocation>
        <location evidence="1">Cytoplasm</location>
    </subcellularLocation>
    <text evidence="1">Membrane-associated.</text>
</comment>
<comment type="similarity">
    <text evidence="1 4">Belongs to the FtsA/MreB family.</text>
</comment>
<comment type="caution">
    <text evidence="5">Was originally thought to be MreB.</text>
</comment>
<evidence type="ECO:0000255" key="1">
    <source>
        <dbReference type="HAMAP-Rule" id="MF_02207"/>
    </source>
</evidence>
<evidence type="ECO:0000303" key="2">
    <source>
    </source>
</evidence>
<evidence type="ECO:0000303" key="3">
    <source>
    </source>
</evidence>
<evidence type="ECO:0000305" key="4"/>
<evidence type="ECO:0000305" key="5">
    <source>
    </source>
</evidence>
<feature type="chain" id="PRO_0000062756" description="Cell shape-determining protein Mbl">
    <location>
        <begin position="1"/>
        <end position="333"/>
    </location>
</feature>
<feature type="binding site" evidence="1">
    <location>
        <begin position="12"/>
        <end position="14"/>
    </location>
    <ligand>
        <name>ATP</name>
        <dbReference type="ChEBI" id="CHEBI:30616"/>
    </ligand>
</feature>
<feature type="binding site" evidence="1">
    <location>
        <begin position="156"/>
        <end position="158"/>
    </location>
    <ligand>
        <name>ATP</name>
        <dbReference type="ChEBI" id="CHEBI:30616"/>
    </ligand>
</feature>
<feature type="binding site" evidence="1">
    <location>
        <begin position="204"/>
        <end position="207"/>
    </location>
    <ligand>
        <name>ATP</name>
        <dbReference type="ChEBI" id="CHEBI:30616"/>
    </ligand>
</feature>
<feature type="binding site" evidence="1">
    <location>
        <begin position="284"/>
        <end position="287"/>
    </location>
    <ligand>
        <name>ATP</name>
        <dbReference type="ChEBI" id="CHEBI:30616"/>
    </ligand>
</feature>
<dbReference type="EMBL" id="X62374">
    <property type="protein sequence ID" value="CAA44237.1"/>
    <property type="molecule type" value="Genomic_DNA"/>
</dbReference>
<dbReference type="EMBL" id="AJ010138">
    <property type="protein sequence ID" value="CAB40597.1"/>
    <property type="molecule type" value="Genomic_DNA"/>
</dbReference>
<dbReference type="EMBL" id="AE017194">
    <property type="protein sequence ID" value="AAS44304.1"/>
    <property type="molecule type" value="Genomic_DNA"/>
</dbReference>
<dbReference type="PIR" id="PN0441">
    <property type="entry name" value="PN0441"/>
</dbReference>
<dbReference type="SMR" id="P32444"/>
<dbReference type="KEGG" id="bca:BCE_5404"/>
<dbReference type="HOGENOM" id="CLU_052037_0_0_9"/>
<dbReference type="Proteomes" id="UP000002527">
    <property type="component" value="Chromosome"/>
</dbReference>
<dbReference type="GO" id="GO:0005737">
    <property type="term" value="C:cytoplasm"/>
    <property type="evidence" value="ECO:0007669"/>
    <property type="project" value="UniProtKB-SubCell"/>
</dbReference>
<dbReference type="GO" id="GO:0005524">
    <property type="term" value="F:ATP binding"/>
    <property type="evidence" value="ECO:0007669"/>
    <property type="project" value="UniProtKB-KW"/>
</dbReference>
<dbReference type="GO" id="GO:0000902">
    <property type="term" value="P:cell morphogenesis"/>
    <property type="evidence" value="ECO:0007669"/>
    <property type="project" value="InterPro"/>
</dbReference>
<dbReference type="GO" id="GO:0008360">
    <property type="term" value="P:regulation of cell shape"/>
    <property type="evidence" value="ECO:0007669"/>
    <property type="project" value="UniProtKB-UniRule"/>
</dbReference>
<dbReference type="CDD" id="cd10225">
    <property type="entry name" value="ASKHA_NBD_MreB-like"/>
    <property type="match status" value="1"/>
</dbReference>
<dbReference type="Gene3D" id="3.30.420.40">
    <property type="match status" value="3"/>
</dbReference>
<dbReference type="HAMAP" id="MF_02207">
    <property type="entry name" value="MreB"/>
    <property type="match status" value="1"/>
</dbReference>
<dbReference type="InterPro" id="IPR043129">
    <property type="entry name" value="ATPase_NBD"/>
</dbReference>
<dbReference type="InterPro" id="IPR004753">
    <property type="entry name" value="MreB"/>
</dbReference>
<dbReference type="InterPro" id="IPR056546">
    <property type="entry name" value="MreB_MamK-like"/>
</dbReference>
<dbReference type="NCBIfam" id="TIGR00904">
    <property type="entry name" value="mreB"/>
    <property type="match status" value="1"/>
</dbReference>
<dbReference type="NCBIfam" id="NF010539">
    <property type="entry name" value="PRK13927.1"/>
    <property type="match status" value="1"/>
</dbReference>
<dbReference type="PANTHER" id="PTHR42749:SF4">
    <property type="entry name" value="CELL SHAPE-DETERMINING PROTEIN MBL"/>
    <property type="match status" value="1"/>
</dbReference>
<dbReference type="PANTHER" id="PTHR42749">
    <property type="entry name" value="CELL SHAPE-DETERMINING PROTEIN MREB"/>
    <property type="match status" value="1"/>
</dbReference>
<dbReference type="Pfam" id="PF06723">
    <property type="entry name" value="MreB_Mbl"/>
    <property type="match status" value="1"/>
</dbReference>
<dbReference type="PRINTS" id="PR01652">
    <property type="entry name" value="SHAPEPROTEIN"/>
</dbReference>
<dbReference type="SUPFAM" id="SSF53067">
    <property type="entry name" value="Actin-like ATPase domain"/>
    <property type="match status" value="2"/>
</dbReference>
<protein>
    <recommendedName>
        <fullName evidence="4">Cell shape-determining protein Mbl</fullName>
    </recommendedName>
</protein>